<proteinExistence type="inferred from homology"/>
<protein>
    <recommendedName>
        <fullName evidence="1">GMP synthase [glutamine-hydrolyzing]</fullName>
        <ecNumber evidence="1">6.3.5.2</ecNumber>
    </recommendedName>
    <alternativeName>
        <fullName evidence="1">GMP synthetase</fullName>
    </alternativeName>
    <alternativeName>
        <fullName evidence="1">Glutamine amidotransferase</fullName>
    </alternativeName>
</protein>
<dbReference type="EC" id="6.3.5.2" evidence="1"/>
<dbReference type="EMBL" id="AE017143">
    <property type="protein sequence ID" value="AAP96299.1"/>
    <property type="molecule type" value="Genomic_DNA"/>
</dbReference>
<dbReference type="EMBL" id="AF057695">
    <property type="protein sequence ID" value="AAC79759.1"/>
    <property type="molecule type" value="Genomic_DNA"/>
</dbReference>
<dbReference type="PIR" id="T31103">
    <property type="entry name" value="T31103"/>
</dbReference>
<dbReference type="RefSeq" id="WP_010945344.1">
    <property type="nucleotide sequence ID" value="NC_002940.2"/>
</dbReference>
<dbReference type="SMR" id="Q7VLE9"/>
<dbReference type="STRING" id="233412.HD_1504"/>
<dbReference type="KEGG" id="hdu:HD_1504"/>
<dbReference type="eggNOG" id="COG0518">
    <property type="taxonomic scope" value="Bacteria"/>
</dbReference>
<dbReference type="eggNOG" id="COG0519">
    <property type="taxonomic scope" value="Bacteria"/>
</dbReference>
<dbReference type="HOGENOM" id="CLU_014340_0_5_6"/>
<dbReference type="OrthoDB" id="9802219at2"/>
<dbReference type="UniPathway" id="UPA00189">
    <property type="reaction ID" value="UER00296"/>
</dbReference>
<dbReference type="Proteomes" id="UP000001022">
    <property type="component" value="Chromosome"/>
</dbReference>
<dbReference type="GO" id="GO:0005829">
    <property type="term" value="C:cytosol"/>
    <property type="evidence" value="ECO:0007669"/>
    <property type="project" value="TreeGrafter"/>
</dbReference>
<dbReference type="GO" id="GO:0005524">
    <property type="term" value="F:ATP binding"/>
    <property type="evidence" value="ECO:0007669"/>
    <property type="project" value="UniProtKB-UniRule"/>
</dbReference>
<dbReference type="GO" id="GO:0003921">
    <property type="term" value="F:GMP synthase activity"/>
    <property type="evidence" value="ECO:0007669"/>
    <property type="project" value="InterPro"/>
</dbReference>
<dbReference type="CDD" id="cd01742">
    <property type="entry name" value="GATase1_GMP_Synthase"/>
    <property type="match status" value="1"/>
</dbReference>
<dbReference type="CDD" id="cd01997">
    <property type="entry name" value="GMP_synthase_C"/>
    <property type="match status" value="1"/>
</dbReference>
<dbReference type="FunFam" id="3.30.300.10:FF:000002">
    <property type="entry name" value="GMP synthase [glutamine-hydrolyzing]"/>
    <property type="match status" value="1"/>
</dbReference>
<dbReference type="FunFam" id="3.40.50.620:FF:000001">
    <property type="entry name" value="GMP synthase [glutamine-hydrolyzing]"/>
    <property type="match status" value="1"/>
</dbReference>
<dbReference type="FunFam" id="3.40.50.880:FF:000001">
    <property type="entry name" value="GMP synthase [glutamine-hydrolyzing]"/>
    <property type="match status" value="1"/>
</dbReference>
<dbReference type="Gene3D" id="3.30.300.10">
    <property type="match status" value="1"/>
</dbReference>
<dbReference type="Gene3D" id="3.40.50.880">
    <property type="match status" value="1"/>
</dbReference>
<dbReference type="Gene3D" id="3.40.50.620">
    <property type="entry name" value="HUPs"/>
    <property type="match status" value="1"/>
</dbReference>
<dbReference type="HAMAP" id="MF_00344">
    <property type="entry name" value="GMP_synthase"/>
    <property type="match status" value="1"/>
</dbReference>
<dbReference type="InterPro" id="IPR029062">
    <property type="entry name" value="Class_I_gatase-like"/>
</dbReference>
<dbReference type="InterPro" id="IPR017926">
    <property type="entry name" value="GATASE"/>
</dbReference>
<dbReference type="InterPro" id="IPR001674">
    <property type="entry name" value="GMP_synth_C"/>
</dbReference>
<dbReference type="InterPro" id="IPR004739">
    <property type="entry name" value="GMP_synth_GATase"/>
</dbReference>
<dbReference type="InterPro" id="IPR022955">
    <property type="entry name" value="GMP_synthase"/>
</dbReference>
<dbReference type="InterPro" id="IPR025777">
    <property type="entry name" value="GMPS_ATP_PPase_dom"/>
</dbReference>
<dbReference type="InterPro" id="IPR022310">
    <property type="entry name" value="NAD/GMP_synthase"/>
</dbReference>
<dbReference type="InterPro" id="IPR014729">
    <property type="entry name" value="Rossmann-like_a/b/a_fold"/>
</dbReference>
<dbReference type="NCBIfam" id="TIGR00884">
    <property type="entry name" value="guaA_Cterm"/>
    <property type="match status" value="1"/>
</dbReference>
<dbReference type="NCBIfam" id="TIGR00888">
    <property type="entry name" value="guaA_Nterm"/>
    <property type="match status" value="1"/>
</dbReference>
<dbReference type="NCBIfam" id="NF000848">
    <property type="entry name" value="PRK00074.1"/>
    <property type="match status" value="1"/>
</dbReference>
<dbReference type="PANTHER" id="PTHR11922:SF2">
    <property type="entry name" value="GMP SYNTHASE [GLUTAMINE-HYDROLYZING]"/>
    <property type="match status" value="1"/>
</dbReference>
<dbReference type="PANTHER" id="PTHR11922">
    <property type="entry name" value="GMP SYNTHASE-RELATED"/>
    <property type="match status" value="1"/>
</dbReference>
<dbReference type="Pfam" id="PF00117">
    <property type="entry name" value="GATase"/>
    <property type="match status" value="1"/>
</dbReference>
<dbReference type="Pfam" id="PF00958">
    <property type="entry name" value="GMP_synt_C"/>
    <property type="match status" value="1"/>
</dbReference>
<dbReference type="Pfam" id="PF02540">
    <property type="entry name" value="NAD_synthase"/>
    <property type="match status" value="1"/>
</dbReference>
<dbReference type="PRINTS" id="PR00097">
    <property type="entry name" value="ANTSNTHASEII"/>
</dbReference>
<dbReference type="PRINTS" id="PR00099">
    <property type="entry name" value="CPSGATASE"/>
</dbReference>
<dbReference type="PRINTS" id="PR00096">
    <property type="entry name" value="GATASE"/>
</dbReference>
<dbReference type="SUPFAM" id="SSF52402">
    <property type="entry name" value="Adenine nucleotide alpha hydrolases-like"/>
    <property type="match status" value="1"/>
</dbReference>
<dbReference type="SUPFAM" id="SSF52317">
    <property type="entry name" value="Class I glutamine amidotransferase-like"/>
    <property type="match status" value="1"/>
</dbReference>
<dbReference type="SUPFAM" id="SSF54810">
    <property type="entry name" value="GMP synthetase C-terminal dimerisation domain"/>
    <property type="match status" value="1"/>
</dbReference>
<dbReference type="PROSITE" id="PS51273">
    <property type="entry name" value="GATASE_TYPE_1"/>
    <property type="match status" value="1"/>
</dbReference>
<dbReference type="PROSITE" id="PS51553">
    <property type="entry name" value="GMPS_ATP_PPASE"/>
    <property type="match status" value="1"/>
</dbReference>
<evidence type="ECO:0000255" key="1">
    <source>
        <dbReference type="HAMAP-Rule" id="MF_00344"/>
    </source>
</evidence>
<keyword id="KW-0067">ATP-binding</keyword>
<keyword id="KW-0315">Glutamine amidotransferase</keyword>
<keyword id="KW-0332">GMP biosynthesis</keyword>
<keyword id="KW-0436">Ligase</keyword>
<keyword id="KW-0547">Nucleotide-binding</keyword>
<keyword id="KW-0658">Purine biosynthesis</keyword>
<keyword id="KW-1185">Reference proteome</keyword>
<reference key="1">
    <citation type="submission" date="2003-06" db="EMBL/GenBank/DDBJ databases">
        <title>The complete genome sequence of Haemophilus ducreyi.</title>
        <authorList>
            <person name="Munson R.S. Jr."/>
            <person name="Ray W.C."/>
            <person name="Mahairas G."/>
            <person name="Sabo P."/>
            <person name="Mungur R."/>
            <person name="Johnson L."/>
            <person name="Nguyen D."/>
            <person name="Wang J."/>
            <person name="Forst C."/>
            <person name="Hood L."/>
        </authorList>
    </citation>
    <scope>NUCLEOTIDE SEQUENCE [LARGE SCALE GENOMIC DNA]</scope>
    <source>
        <strain>35000HP / ATCC 700724</strain>
    </source>
</reference>
<reference key="2">
    <citation type="journal article" date="1998" name="J. Bacteriol.">
        <title>Haemophilus ducreyi secretes a filamentous hemagglutinin-like protein.</title>
        <authorList>
            <person name="Ward C.K."/>
            <person name="Lumbley S.R."/>
            <person name="Latimer J.L."/>
            <person name="Cope L.D."/>
            <person name="Hansen E.J."/>
        </authorList>
    </citation>
    <scope>NUCLEOTIDE SEQUENCE [GENOMIC DNA] OF 156-523</scope>
    <source>
        <strain>35000HP / ATCC 700724</strain>
    </source>
</reference>
<feature type="chain" id="PRO_0000140130" description="GMP synthase [glutamine-hydrolyzing]">
    <location>
        <begin position="1"/>
        <end position="523"/>
    </location>
</feature>
<feature type="domain" description="Glutamine amidotransferase type-1" evidence="1">
    <location>
        <begin position="8"/>
        <end position="205"/>
    </location>
</feature>
<feature type="domain" description="GMPS ATP-PPase" evidence="1">
    <location>
        <begin position="206"/>
        <end position="398"/>
    </location>
</feature>
<feature type="active site" description="Nucleophile" evidence="1">
    <location>
        <position position="85"/>
    </location>
</feature>
<feature type="active site" evidence="1">
    <location>
        <position position="179"/>
    </location>
</feature>
<feature type="active site" evidence="1">
    <location>
        <position position="181"/>
    </location>
</feature>
<feature type="binding site" evidence="1">
    <location>
        <begin position="233"/>
        <end position="239"/>
    </location>
    <ligand>
        <name>ATP</name>
        <dbReference type="ChEBI" id="CHEBI:30616"/>
    </ligand>
</feature>
<sequence>MNNIHNHKILILDFGSQYTQLIARRIREIGVYCELWAWDVTEKQIREFNPTGIILSGGPESTTETNSPHAPEYVFKAGVPVLGICYGMQTMAMQLGGLTEASEQREFGYAAVELQHADQLFAKLNDDLTASQPKLDVWMSHGDKVTRLPAGFQTTAVTPTCPIAAMSDEKRRFYGVQFHPEVTHTKSGLALLTNFVENICGCARSWTPENIIEDAVAKIKQKVGNDQVILGLSGGVDSSVTALLLHRAIGKNLHCVFVDNGLLRLNEGDQVMEMFGDKFGLNIIRVNAEERFLEALKGIDEPEAKRKIIGKVFIDIFDDEAKKLTDVKWLAQGTIYPDVIESAASKTGKAHVIKSHHNVGGLPDYMKLGLVEPLRELFKDEVRKIGLTLGLPAEMLNRHPFPGPGLGVRVLGEIKKEYCDLLRNADAIFIEELYKSGWYYKVSQAFTVFLPVKSVGVMGDGRKYDWVVSLRAVETIDFMTAHWAHLPYELLGKISNRIINEVNGISRVVYDVSGKPPATIEWE</sequence>
<accession>Q7VLE9</accession>
<accession>Q9ZHL2</accession>
<organism>
    <name type="scientific">Haemophilus ducreyi (strain 35000HP / ATCC 700724)</name>
    <dbReference type="NCBI Taxonomy" id="233412"/>
    <lineage>
        <taxon>Bacteria</taxon>
        <taxon>Pseudomonadati</taxon>
        <taxon>Pseudomonadota</taxon>
        <taxon>Gammaproteobacteria</taxon>
        <taxon>Pasteurellales</taxon>
        <taxon>Pasteurellaceae</taxon>
        <taxon>Haemophilus</taxon>
    </lineage>
</organism>
<gene>
    <name evidence="1" type="primary">guaA</name>
    <name type="ordered locus">HD_1504</name>
</gene>
<name>GUAA_HAEDU</name>
<comment type="function">
    <text evidence="1">Catalyzes the synthesis of GMP from XMP.</text>
</comment>
<comment type="catalytic activity">
    <reaction evidence="1">
        <text>XMP + L-glutamine + ATP + H2O = GMP + L-glutamate + AMP + diphosphate + 2 H(+)</text>
        <dbReference type="Rhea" id="RHEA:11680"/>
        <dbReference type="ChEBI" id="CHEBI:15377"/>
        <dbReference type="ChEBI" id="CHEBI:15378"/>
        <dbReference type="ChEBI" id="CHEBI:29985"/>
        <dbReference type="ChEBI" id="CHEBI:30616"/>
        <dbReference type="ChEBI" id="CHEBI:33019"/>
        <dbReference type="ChEBI" id="CHEBI:57464"/>
        <dbReference type="ChEBI" id="CHEBI:58115"/>
        <dbReference type="ChEBI" id="CHEBI:58359"/>
        <dbReference type="ChEBI" id="CHEBI:456215"/>
        <dbReference type="EC" id="6.3.5.2"/>
    </reaction>
</comment>
<comment type="pathway">
    <text evidence="1">Purine metabolism; GMP biosynthesis; GMP from XMP (L-Gln route): step 1/1.</text>
</comment>
<comment type="subunit">
    <text evidence="1">Homodimer.</text>
</comment>